<keyword id="KW-0002">3D-structure</keyword>
<keyword id="KW-0025">Alternative splicing</keyword>
<keyword id="KW-0121">Carboxypeptidase</keyword>
<keyword id="KW-1003">Cell membrane</keyword>
<keyword id="KW-0325">Glycoprotein</keyword>
<keyword id="KW-0378">Hydrolase</keyword>
<keyword id="KW-0449">Lipoprotein</keyword>
<keyword id="KW-0472">Membrane</keyword>
<keyword id="KW-0479">Metal-binding</keyword>
<keyword id="KW-0482">Metalloprotease</keyword>
<keyword id="KW-0564">Palmitate</keyword>
<keyword id="KW-0597">Phosphoprotein</keyword>
<keyword id="KW-0645">Protease</keyword>
<keyword id="KW-1267">Proteomics identification</keyword>
<keyword id="KW-1185">Reference proteome</keyword>
<keyword id="KW-0677">Repeat</keyword>
<keyword id="KW-0732">Signal</keyword>
<keyword id="KW-0812">Transmembrane</keyword>
<keyword id="KW-1133">Transmembrane helix</keyword>
<keyword id="KW-0862">Zinc</keyword>
<protein>
    <recommendedName>
        <fullName>Carboxypeptidase D</fullName>
        <ecNumber>3.4.17.22</ecNumber>
    </recommendedName>
    <alternativeName>
        <fullName>Metallocarboxypeptidase D</fullName>
    </alternativeName>
    <alternativeName>
        <fullName>gp180</fullName>
    </alternativeName>
</protein>
<proteinExistence type="evidence at protein level"/>
<gene>
    <name type="primary">CPD</name>
</gene>
<accession>O75976</accession>
<accession>B7Z7T9</accession>
<accession>B7ZAU4</accession>
<accession>F5GZH6</accession>
<accession>O15377</accession>
<accession>Q86SH9</accession>
<accession>Q86XE6</accession>
<name>CBPD_HUMAN</name>
<reference key="1">
    <citation type="journal article" date="1998" name="Gene">
        <title>Cloning, functional expression, and chromosomal localization of the human and mouse gp180-carboxypeptidase D-like enzyme.</title>
        <authorList>
            <person name="Ishikawa T."/>
            <person name="Murakami K."/>
            <person name="Kido Y."/>
            <person name="Ohnishi S."/>
            <person name="Yazaki Y."/>
            <person name="Harada F."/>
            <person name="Kuroki K."/>
        </authorList>
    </citation>
    <scope>NUCLEOTIDE SEQUENCE [MRNA] (ISOFORM 1)</scope>
    <source>
        <tissue>Fetal liver</tissue>
    </source>
</reference>
<reference key="2">
    <citation type="journal article" date="1997" name="Biochem. J.">
        <title>Sequence of human carboxypeptidase D reveals it to be a member of the regulatory carboxypeptidase family with three tandem active site domains.</title>
        <authorList>
            <person name="Tan F."/>
            <person name="Rehli M."/>
            <person name="Krause S.W."/>
            <person name="Skidgel R.A."/>
        </authorList>
    </citation>
    <scope>NUCLEOTIDE SEQUENCE [MRNA] (ISOFORM 1)</scope>
    <source>
        <tissue>Fetal brain</tissue>
        <tissue>Placenta</tissue>
    </source>
</reference>
<reference key="3">
    <citation type="journal article" date="2004" name="Nat. Genet.">
        <title>Complete sequencing and characterization of 21,243 full-length human cDNAs.</title>
        <authorList>
            <person name="Ota T."/>
            <person name="Suzuki Y."/>
            <person name="Nishikawa T."/>
            <person name="Otsuki T."/>
            <person name="Sugiyama T."/>
            <person name="Irie R."/>
            <person name="Wakamatsu A."/>
            <person name="Hayashi K."/>
            <person name="Sato H."/>
            <person name="Nagai K."/>
            <person name="Kimura K."/>
            <person name="Makita H."/>
            <person name="Sekine M."/>
            <person name="Obayashi M."/>
            <person name="Nishi T."/>
            <person name="Shibahara T."/>
            <person name="Tanaka T."/>
            <person name="Ishii S."/>
            <person name="Yamamoto J."/>
            <person name="Saito K."/>
            <person name="Kawai Y."/>
            <person name="Isono Y."/>
            <person name="Nakamura Y."/>
            <person name="Nagahari K."/>
            <person name="Murakami K."/>
            <person name="Yasuda T."/>
            <person name="Iwayanagi T."/>
            <person name="Wagatsuma M."/>
            <person name="Shiratori A."/>
            <person name="Sudo H."/>
            <person name="Hosoiri T."/>
            <person name="Kaku Y."/>
            <person name="Kodaira H."/>
            <person name="Kondo H."/>
            <person name="Sugawara M."/>
            <person name="Takahashi M."/>
            <person name="Kanda K."/>
            <person name="Yokoi T."/>
            <person name="Furuya T."/>
            <person name="Kikkawa E."/>
            <person name="Omura Y."/>
            <person name="Abe K."/>
            <person name="Kamihara K."/>
            <person name="Katsuta N."/>
            <person name="Sato K."/>
            <person name="Tanikawa M."/>
            <person name="Yamazaki M."/>
            <person name="Ninomiya K."/>
            <person name="Ishibashi T."/>
            <person name="Yamashita H."/>
            <person name="Murakawa K."/>
            <person name="Fujimori K."/>
            <person name="Tanai H."/>
            <person name="Kimata M."/>
            <person name="Watanabe M."/>
            <person name="Hiraoka S."/>
            <person name="Chiba Y."/>
            <person name="Ishida S."/>
            <person name="Ono Y."/>
            <person name="Takiguchi S."/>
            <person name="Watanabe S."/>
            <person name="Yosida M."/>
            <person name="Hotuta T."/>
            <person name="Kusano J."/>
            <person name="Kanehori K."/>
            <person name="Takahashi-Fujii A."/>
            <person name="Hara H."/>
            <person name="Tanase T.-O."/>
            <person name="Nomura Y."/>
            <person name="Togiya S."/>
            <person name="Komai F."/>
            <person name="Hara R."/>
            <person name="Takeuchi K."/>
            <person name="Arita M."/>
            <person name="Imose N."/>
            <person name="Musashino K."/>
            <person name="Yuuki H."/>
            <person name="Oshima A."/>
            <person name="Sasaki N."/>
            <person name="Aotsuka S."/>
            <person name="Yoshikawa Y."/>
            <person name="Matsunawa H."/>
            <person name="Ichihara T."/>
            <person name="Shiohata N."/>
            <person name="Sano S."/>
            <person name="Moriya S."/>
            <person name="Momiyama H."/>
            <person name="Satoh N."/>
            <person name="Takami S."/>
            <person name="Terashima Y."/>
            <person name="Suzuki O."/>
            <person name="Nakagawa S."/>
            <person name="Senoh A."/>
            <person name="Mizoguchi H."/>
            <person name="Goto Y."/>
            <person name="Shimizu F."/>
            <person name="Wakebe H."/>
            <person name="Hishigaki H."/>
            <person name="Watanabe T."/>
            <person name="Sugiyama A."/>
            <person name="Takemoto M."/>
            <person name="Kawakami B."/>
            <person name="Yamazaki M."/>
            <person name="Watanabe K."/>
            <person name="Kumagai A."/>
            <person name="Itakura S."/>
            <person name="Fukuzumi Y."/>
            <person name="Fujimori Y."/>
            <person name="Komiyama M."/>
            <person name="Tashiro H."/>
            <person name="Tanigami A."/>
            <person name="Fujiwara T."/>
            <person name="Ono T."/>
            <person name="Yamada K."/>
            <person name="Fujii Y."/>
            <person name="Ozaki K."/>
            <person name="Hirao M."/>
            <person name="Ohmori Y."/>
            <person name="Kawabata A."/>
            <person name="Hikiji T."/>
            <person name="Kobatake N."/>
            <person name="Inagaki H."/>
            <person name="Ikema Y."/>
            <person name="Okamoto S."/>
            <person name="Okitani R."/>
            <person name="Kawakami T."/>
            <person name="Noguchi S."/>
            <person name="Itoh T."/>
            <person name="Shigeta K."/>
            <person name="Senba T."/>
            <person name="Matsumura K."/>
            <person name="Nakajima Y."/>
            <person name="Mizuno T."/>
            <person name="Morinaga M."/>
            <person name="Sasaki M."/>
            <person name="Togashi T."/>
            <person name="Oyama M."/>
            <person name="Hata H."/>
            <person name="Watanabe M."/>
            <person name="Komatsu T."/>
            <person name="Mizushima-Sugano J."/>
            <person name="Satoh T."/>
            <person name="Shirai Y."/>
            <person name="Takahashi Y."/>
            <person name="Nakagawa K."/>
            <person name="Okumura K."/>
            <person name="Nagase T."/>
            <person name="Nomura N."/>
            <person name="Kikuchi H."/>
            <person name="Masuho Y."/>
            <person name="Yamashita R."/>
            <person name="Nakai K."/>
            <person name="Yada T."/>
            <person name="Nakamura Y."/>
            <person name="Ohara O."/>
            <person name="Isogai T."/>
            <person name="Sugano S."/>
        </authorList>
    </citation>
    <scope>NUCLEOTIDE SEQUENCE [LARGE SCALE MRNA] (ISOFORM 2)</scope>
    <source>
        <tissue>Testis</tissue>
    </source>
</reference>
<reference key="4">
    <citation type="journal article" date="2006" name="Nature">
        <title>DNA sequence of human chromosome 17 and analysis of rearrangement in the human lineage.</title>
        <authorList>
            <person name="Zody M.C."/>
            <person name="Garber M."/>
            <person name="Adams D.J."/>
            <person name="Sharpe T."/>
            <person name="Harrow J."/>
            <person name="Lupski J.R."/>
            <person name="Nicholson C."/>
            <person name="Searle S.M."/>
            <person name="Wilming L."/>
            <person name="Young S.K."/>
            <person name="Abouelleil A."/>
            <person name="Allen N.R."/>
            <person name="Bi W."/>
            <person name="Bloom T."/>
            <person name="Borowsky M.L."/>
            <person name="Bugalter B.E."/>
            <person name="Butler J."/>
            <person name="Chang J.L."/>
            <person name="Chen C.-K."/>
            <person name="Cook A."/>
            <person name="Corum B."/>
            <person name="Cuomo C.A."/>
            <person name="de Jong P.J."/>
            <person name="DeCaprio D."/>
            <person name="Dewar K."/>
            <person name="FitzGerald M."/>
            <person name="Gilbert J."/>
            <person name="Gibson R."/>
            <person name="Gnerre S."/>
            <person name="Goldstein S."/>
            <person name="Grafham D.V."/>
            <person name="Grocock R."/>
            <person name="Hafez N."/>
            <person name="Hagopian D.S."/>
            <person name="Hart E."/>
            <person name="Norman C.H."/>
            <person name="Humphray S."/>
            <person name="Jaffe D.B."/>
            <person name="Jones M."/>
            <person name="Kamal M."/>
            <person name="Khodiyar V.K."/>
            <person name="LaButti K."/>
            <person name="Laird G."/>
            <person name="Lehoczky J."/>
            <person name="Liu X."/>
            <person name="Lokyitsang T."/>
            <person name="Loveland J."/>
            <person name="Lui A."/>
            <person name="Macdonald P."/>
            <person name="Major J.E."/>
            <person name="Matthews L."/>
            <person name="Mauceli E."/>
            <person name="McCarroll S.A."/>
            <person name="Mihalev A.H."/>
            <person name="Mudge J."/>
            <person name="Nguyen C."/>
            <person name="Nicol R."/>
            <person name="O'Leary S.B."/>
            <person name="Osoegawa K."/>
            <person name="Schwartz D.C."/>
            <person name="Shaw-Smith C."/>
            <person name="Stankiewicz P."/>
            <person name="Steward C."/>
            <person name="Swarbreck D."/>
            <person name="Venkataraman V."/>
            <person name="Whittaker C.A."/>
            <person name="Yang X."/>
            <person name="Zimmer A.R."/>
            <person name="Bradley A."/>
            <person name="Hubbard T."/>
            <person name="Birren B.W."/>
            <person name="Rogers J."/>
            <person name="Lander E.S."/>
            <person name="Nusbaum C."/>
        </authorList>
    </citation>
    <scope>NUCLEOTIDE SEQUENCE [LARGE SCALE GENOMIC DNA]</scope>
</reference>
<reference key="5">
    <citation type="submission" date="2002-07" db="EMBL/GenBank/DDBJ databases">
        <authorList>
            <person name="Tan F."/>
            <person name="Rehli M."/>
            <person name="Skidgel R.A."/>
        </authorList>
    </citation>
    <scope>SEQUENCE REVISION TO 11-13; 49-52; 159-162 AND 493</scope>
</reference>
<reference key="6">
    <citation type="journal article" date="2004" name="Genome Res.">
        <title>The status, quality, and expansion of the NIH full-length cDNA project: the Mammalian Gene Collection (MGC).</title>
        <authorList>
            <consortium name="The MGC Project Team"/>
        </authorList>
    </citation>
    <scope>NUCLEOTIDE SEQUENCE [LARGE SCALE MRNA] (ISOFORM 1)</scope>
    <scope>VARIANTS GLU-36; GLY-454 AND ASN-505</scope>
    <source>
        <tissue>Testis</tissue>
    </source>
</reference>
<reference key="7">
    <citation type="journal article" date="1997" name="Life Sci.">
        <title>Identification of a membrane-bound carboxypeptidase as the mammalian homolog of duck gp180, a hepatitis B virus-binding protein.</title>
        <authorList>
            <person name="McGwire G.B."/>
            <person name="Tan F."/>
            <person name="Michel B."/>
            <person name="Rehli M."/>
            <person name="Skidgel R.A."/>
        </authorList>
    </citation>
    <scope>CHARACTERIZATION</scope>
</reference>
<reference key="8">
    <citation type="journal article" date="2003" name="J. Biol. Chem.">
        <title>Palmitoylation of carboxypeptidase D. Implications for intracellular trafficking.</title>
        <authorList>
            <person name="Kalinina E.V."/>
            <person name="Fricker L.D."/>
        </authorList>
    </citation>
    <scope>PALMITOYLATION AT CYS-1317; CYS-1321 AND CYS-1323</scope>
</reference>
<reference key="9">
    <citation type="journal article" date="2003" name="Nat. Biotechnol.">
        <title>Identification and quantification of N-linked glycoproteins using hydrazide chemistry, stable isotope labeling and mass spectrometry.</title>
        <authorList>
            <person name="Zhang H."/>
            <person name="Li X.-J."/>
            <person name="Martin D.B."/>
            <person name="Aebersold R."/>
        </authorList>
    </citation>
    <scope>GLYCOSYLATION AT ASN-172; ASN-811 AND ASN-955</scope>
</reference>
<reference key="10">
    <citation type="journal article" date="2008" name="Proc. Natl. Acad. Sci. U.S.A.">
        <title>A quantitative atlas of mitotic phosphorylation.</title>
        <authorList>
            <person name="Dephoure N."/>
            <person name="Zhou C."/>
            <person name="Villen J."/>
            <person name="Beausoleil S.A."/>
            <person name="Bakalarski C.E."/>
            <person name="Elledge S.J."/>
            <person name="Gygi S.P."/>
        </authorList>
    </citation>
    <scope>PHOSPHORYLATION [LARGE SCALE ANALYSIS] AT THR-1368 AND THR-1370</scope>
    <scope>IDENTIFICATION BY MASS SPECTROMETRY [LARGE SCALE ANALYSIS]</scope>
    <source>
        <tissue>Cervix carcinoma</tissue>
    </source>
</reference>
<reference key="11">
    <citation type="journal article" date="2009" name="J. Proteome Res.">
        <title>Glycoproteomics analysis of human liver tissue by combination of multiple enzyme digestion and hydrazide chemistry.</title>
        <authorList>
            <person name="Chen R."/>
            <person name="Jiang X."/>
            <person name="Sun D."/>
            <person name="Han G."/>
            <person name="Wang F."/>
            <person name="Ye M."/>
            <person name="Wang L."/>
            <person name="Zou H."/>
        </authorList>
    </citation>
    <scope>GLYCOSYLATION [LARGE SCALE ANALYSIS] AT ASN-811; ASN-955 AND ASN-1070</scope>
    <source>
        <tissue>Liver</tissue>
    </source>
</reference>
<reference key="12">
    <citation type="journal article" date="2009" name="Sci. Signal.">
        <title>Quantitative phosphoproteomic analysis of T cell receptor signaling reveals system-wide modulation of protein-protein interactions.</title>
        <authorList>
            <person name="Mayya V."/>
            <person name="Lundgren D.H."/>
            <person name="Hwang S.-I."/>
            <person name="Rezaul K."/>
            <person name="Wu L."/>
            <person name="Eng J.K."/>
            <person name="Rodionov V."/>
            <person name="Han D.K."/>
        </authorList>
    </citation>
    <scope>PHOSPHORYLATION [LARGE SCALE ANALYSIS] AT SER-1358; SER-1361; THR-1368 AND THR-1370</scope>
    <scope>IDENTIFICATION BY MASS SPECTROMETRY [LARGE SCALE ANALYSIS]</scope>
    <source>
        <tissue>Leukemic T-cell</tissue>
    </source>
</reference>
<reference key="13">
    <citation type="journal article" date="2011" name="BMC Syst. Biol.">
        <title>Initial characterization of the human central proteome.</title>
        <authorList>
            <person name="Burkard T.R."/>
            <person name="Planyavsky M."/>
            <person name="Kaupe I."/>
            <person name="Breitwieser F.P."/>
            <person name="Buerckstuemmer T."/>
            <person name="Bennett K.L."/>
            <person name="Superti-Furga G."/>
            <person name="Colinge J."/>
        </authorList>
    </citation>
    <scope>IDENTIFICATION BY MASS SPECTROMETRY [LARGE SCALE ANALYSIS]</scope>
</reference>
<reference key="14">
    <citation type="journal article" date="2011" name="Sci. Signal.">
        <title>System-wide temporal characterization of the proteome and phosphoproteome of human embryonic stem cell differentiation.</title>
        <authorList>
            <person name="Rigbolt K.T."/>
            <person name="Prokhorova T.A."/>
            <person name="Akimov V."/>
            <person name="Henningsen J."/>
            <person name="Johansen P.T."/>
            <person name="Kratchmarova I."/>
            <person name="Kassem M."/>
            <person name="Mann M."/>
            <person name="Olsen J.V."/>
            <person name="Blagoev B."/>
        </authorList>
    </citation>
    <scope>PHOSPHORYLATION [LARGE SCALE ANALYSIS] AT SER-1358; SER-1361; THR-1368 AND THR-1370</scope>
    <scope>IDENTIFICATION BY MASS SPECTROMETRY [LARGE SCALE ANALYSIS]</scope>
</reference>
<reference key="15">
    <citation type="journal article" date="2013" name="J. Proteome Res.">
        <title>Toward a comprehensive characterization of a human cancer cell phosphoproteome.</title>
        <authorList>
            <person name="Zhou H."/>
            <person name="Di Palma S."/>
            <person name="Preisinger C."/>
            <person name="Peng M."/>
            <person name="Polat A.N."/>
            <person name="Heck A.J."/>
            <person name="Mohammed S."/>
        </authorList>
    </citation>
    <scope>PHOSPHORYLATION [LARGE SCALE ANALYSIS] AT THR-1368 AND THR-1370</scope>
    <scope>IDENTIFICATION BY MASS SPECTROMETRY [LARGE SCALE ANALYSIS]</scope>
    <source>
        <tissue>Cervix carcinoma</tissue>
        <tissue>Erythroleukemia</tissue>
    </source>
</reference>
<reference key="16">
    <citation type="journal article" date="2014" name="J. Proteomics">
        <title>An enzyme assisted RP-RPLC approach for in-depth analysis of human liver phosphoproteome.</title>
        <authorList>
            <person name="Bian Y."/>
            <person name="Song C."/>
            <person name="Cheng K."/>
            <person name="Dong M."/>
            <person name="Wang F."/>
            <person name="Huang J."/>
            <person name="Sun D."/>
            <person name="Wang L."/>
            <person name="Ye M."/>
            <person name="Zou H."/>
        </authorList>
    </citation>
    <scope>IDENTIFICATION BY MASS SPECTROMETRY [LARGE SCALE ANALYSIS]</scope>
    <source>
        <tissue>Liver</tissue>
    </source>
</reference>
<reference key="17">
    <citation type="journal article" date="2015" name="Proteomics">
        <title>N-terminome analysis of the human mitochondrial proteome.</title>
        <authorList>
            <person name="Vaca Jacome A.S."/>
            <person name="Rabilloud T."/>
            <person name="Schaeffer-Reiss C."/>
            <person name="Rompais M."/>
            <person name="Ayoub D."/>
            <person name="Lane L."/>
            <person name="Bairoch A."/>
            <person name="Van Dorsselaer A."/>
            <person name="Carapito C."/>
        </authorList>
    </citation>
    <scope>IDENTIFICATION BY MASS SPECTROMETRY [LARGE SCALE ANALYSIS]</scope>
</reference>
<comment type="catalytic activity">
    <reaction>
        <text>Releases C-terminal Arg and Lys from polypeptides.</text>
        <dbReference type="EC" id="3.4.17.22"/>
    </reaction>
</comment>
<comment type="cofactor">
    <cofactor evidence="2">
        <name>Zn(2+)</name>
        <dbReference type="ChEBI" id="CHEBI:29105"/>
    </cofactor>
    <text evidence="2">Binds 2 Zn(2+) ions per subunit.</text>
</comment>
<comment type="biophysicochemical properties">
    <phDependence>
        <text>Optimum pH is 6.0-6.5.</text>
    </phDependence>
</comment>
<comment type="subcellular location">
    <subcellularLocation>
        <location evidence="2">Cell membrane</location>
        <topology evidence="3">Single-pass type I membrane protein</topology>
    </subcellularLocation>
</comment>
<comment type="alternative products">
    <event type="alternative splicing"/>
    <isoform>
        <id>O75976-1</id>
        <name>1</name>
        <sequence type="displayed"/>
    </isoform>
    <isoform>
        <id>O75976-2</id>
        <name>2</name>
        <sequence type="described" ref="VSP_045833 VSP_045834"/>
    </isoform>
</comment>
<comment type="tissue specificity">
    <text>Highly expressed in placenta, pancreas and hepatoma cells. Lower levels found in skeletal muscle, heart and colon carcinoma and melanoma cell lines.</text>
</comment>
<comment type="domain">
    <text>There are 3 carboxypeptidase-like domains. Only the first two domains seem to have kept a catalytic activity.</text>
</comment>
<comment type="similarity">
    <text evidence="11">Belongs to the peptidase M14 family.</text>
</comment>
<feature type="signal peptide" evidence="3">
    <location>
        <begin position="1"/>
        <end position="31"/>
    </location>
</feature>
<feature type="chain" id="PRO_0000004401" description="Carboxypeptidase D">
    <location>
        <begin position="32"/>
        <end position="1380"/>
    </location>
</feature>
<feature type="topological domain" description="Extracellular" evidence="3">
    <location>
        <begin position="32"/>
        <end position="1299"/>
    </location>
</feature>
<feature type="transmembrane region" description="Helical" evidence="3">
    <location>
        <begin position="1300"/>
        <end position="1320"/>
    </location>
</feature>
<feature type="topological domain" description="Cytoplasmic" evidence="3">
    <location>
        <begin position="1321"/>
        <end position="1380"/>
    </location>
</feature>
<feature type="domain" description="Peptidase M14 1" evidence="4">
    <location>
        <begin position="57"/>
        <end position="380"/>
    </location>
</feature>
<feature type="domain" description="Peptidase M14 2" evidence="4">
    <location>
        <begin position="502"/>
        <end position="792"/>
    </location>
</feature>
<feature type="domain" description="Peptidase M14 3" evidence="4">
    <location>
        <begin position="932"/>
        <end position="1211"/>
    </location>
</feature>
<feature type="region of interest" description="Disordered" evidence="5">
    <location>
        <begin position="190"/>
        <end position="232"/>
    </location>
</feature>
<feature type="region of interest" description="Disordered" evidence="5">
    <location>
        <begin position="874"/>
        <end position="899"/>
    </location>
</feature>
<feature type="region of interest" description="Disordered" evidence="5">
    <location>
        <begin position="1359"/>
        <end position="1380"/>
    </location>
</feature>
<feature type="short sequence motif" description="Cell attachment site" evidence="3">
    <location>
        <begin position="162"/>
        <end position="164"/>
    </location>
</feature>
<feature type="compositionally biased region" description="Gly residues" evidence="5">
    <location>
        <begin position="195"/>
        <end position="204"/>
    </location>
</feature>
<feature type="compositionally biased region" description="Polar residues" evidence="5">
    <location>
        <begin position="887"/>
        <end position="897"/>
    </location>
</feature>
<feature type="active site" description="Proton donor/acceptor" evidence="4">
    <location>
        <position position="350"/>
    </location>
</feature>
<feature type="active site" description="Proton donor/acceptor" evidence="4">
    <location>
        <position position="762"/>
    </location>
</feature>
<feature type="binding site" evidence="4">
    <location>
        <position position="139"/>
    </location>
    <ligand>
        <name>Zn(2+)</name>
        <dbReference type="ChEBI" id="CHEBI:29105"/>
        <label>1</label>
        <note>catalytic</note>
    </ligand>
</feature>
<feature type="binding site" evidence="4">
    <location>
        <position position="142"/>
    </location>
    <ligand>
        <name>Zn(2+)</name>
        <dbReference type="ChEBI" id="CHEBI:29105"/>
        <label>1</label>
        <note>catalytic</note>
    </ligand>
</feature>
<feature type="binding site" evidence="4">
    <location>
        <position position="257"/>
    </location>
    <ligand>
        <name>Zn(2+)</name>
        <dbReference type="ChEBI" id="CHEBI:29105"/>
        <label>1</label>
        <note>catalytic</note>
    </ligand>
</feature>
<feature type="binding site" evidence="4">
    <location>
        <position position="564"/>
    </location>
    <ligand>
        <name>Zn(2+)</name>
        <dbReference type="ChEBI" id="CHEBI:29105"/>
        <label>2</label>
        <note>catalytic</note>
    </ligand>
</feature>
<feature type="binding site" evidence="4">
    <location>
        <position position="567"/>
    </location>
    <ligand>
        <name>Zn(2+)</name>
        <dbReference type="ChEBI" id="CHEBI:29105"/>
        <label>2</label>
        <note>catalytic</note>
    </ligand>
</feature>
<feature type="binding site" evidence="4">
    <location>
        <position position="671"/>
    </location>
    <ligand>
        <name>Zn(2+)</name>
        <dbReference type="ChEBI" id="CHEBI:29105"/>
        <label>2</label>
        <note>catalytic</note>
    </ligand>
</feature>
<feature type="modified residue" description="Phosphotyrosine" evidence="1">
    <location>
        <position position="265"/>
    </location>
</feature>
<feature type="modified residue" description="Phosphoserine" evidence="1">
    <location>
        <position position="270"/>
    </location>
</feature>
<feature type="modified residue" description="Phosphoserine" evidence="13 14">
    <location>
        <position position="1358"/>
    </location>
</feature>
<feature type="modified residue" description="Phosphoserine" evidence="13 14">
    <location>
        <position position="1361"/>
    </location>
</feature>
<feature type="modified residue" description="Phosphothreonine" evidence="12 13 14 15">
    <location>
        <position position="1368"/>
    </location>
</feature>
<feature type="modified residue" description="Phosphothreonine" evidence="12 13 14 15">
    <location>
        <position position="1370"/>
    </location>
</feature>
<feature type="lipid moiety-binding region" description="S-palmitoyl cysteine" evidence="6">
    <location>
        <position position="1317"/>
    </location>
</feature>
<feature type="lipid moiety-binding region" description="S-palmitoyl cysteine" evidence="6">
    <location>
        <position position="1321"/>
    </location>
</feature>
<feature type="lipid moiety-binding region" description="S-palmitoyl cysteine" evidence="6">
    <location>
        <position position="1323"/>
    </location>
</feature>
<feature type="glycosylation site" description="N-linked (GlcNAc...) asparagine" evidence="7">
    <location>
        <position position="172"/>
    </location>
</feature>
<feature type="glycosylation site" description="N-linked (GlcNAc...) asparagine" evidence="3">
    <location>
        <position position="217"/>
    </location>
</feature>
<feature type="glycosylation site" description="N-linked (GlcNAc...) asparagine" evidence="3">
    <location>
        <position position="399"/>
    </location>
</feature>
<feature type="glycosylation site" description="N-linked (GlcNAc...) asparagine" evidence="3">
    <location>
        <position position="410"/>
    </location>
</feature>
<feature type="glycosylation site" description="N-linked (GlcNAc...) asparagine" evidence="3">
    <location>
        <position position="429"/>
    </location>
</feature>
<feature type="glycosylation site" description="N-linked (GlcNAc...) asparagine" evidence="3">
    <location>
        <position position="522"/>
    </location>
</feature>
<feature type="glycosylation site" description="N-linked (GlcNAc...) asparagine" evidence="3">
    <location>
        <position position="626"/>
    </location>
</feature>
<feature type="glycosylation site" description="N-linked (GlcNAc...) asparagine" evidence="7 9">
    <location>
        <position position="811"/>
    </location>
</feature>
<feature type="glycosylation site" description="N-linked (GlcNAc...) asparagine" evidence="3">
    <location>
        <position position="855"/>
    </location>
</feature>
<feature type="glycosylation site" description="N-linked (GlcNAc...) asparagine" evidence="3">
    <location>
        <position position="867"/>
    </location>
</feature>
<feature type="glycosylation site" description="N-linked (GlcNAc...) asparagine" evidence="3">
    <location>
        <position position="879"/>
    </location>
</feature>
<feature type="glycosylation site" description="N-linked (GlcNAc...) asparagine" evidence="7 9">
    <location>
        <position position="955"/>
    </location>
</feature>
<feature type="glycosylation site" description="N-linked (GlcNAc...) asparagine" evidence="3">
    <location>
        <position position="978"/>
    </location>
</feature>
<feature type="glycosylation site" description="N-linked (GlcNAc...) asparagine" evidence="9">
    <location>
        <position position="1070"/>
    </location>
</feature>
<feature type="glycosylation site" description="N-linked (GlcNAc...) asparagine" evidence="3">
    <location>
        <position position="1142"/>
    </location>
</feature>
<feature type="splice variant" id="VSP_045833" description="In isoform 2." evidence="10">
    <original>MA</original>
    <variation>MR</variation>
    <location>
        <begin position="1"/>
        <end position="2"/>
    </location>
</feature>
<feature type="splice variant" id="VSP_045834" description="In isoform 2." evidence="10">
    <location>
        <begin position="3"/>
        <end position="249"/>
    </location>
</feature>
<feature type="sequence variant" id="VAR_027771" description="In dbSNP:rs17857300." evidence="8">
    <original>K</original>
    <variation>E</variation>
    <location>
        <position position="36"/>
    </location>
</feature>
<feature type="sequence variant" id="VAR_027772" description="In dbSNP:rs17857301." evidence="8">
    <original>E</original>
    <variation>G</variation>
    <location>
        <position position="454"/>
    </location>
</feature>
<feature type="sequence variant" id="VAR_027773" description="In dbSNP:rs17854355." evidence="8">
    <original>H</original>
    <variation>N</variation>
    <location>
        <position position="505"/>
    </location>
</feature>
<feature type="sequence variant" id="VAR_027774" description="In dbSNP:rs1860543.">
    <original>T</original>
    <variation>I</variation>
    <location>
        <position position="899"/>
    </location>
</feature>
<feature type="sequence conflict" description="In Ref. 3; BAH14780." evidence="11" ref="3">
    <original>A</original>
    <variation>V</variation>
    <location>
        <position position="863"/>
    </location>
</feature>
<feature type="sequence conflict" description="In Ref. 1 and 2." evidence="11" ref="1 2">
    <original>D</original>
    <variation>V</variation>
    <location>
        <position position="896"/>
    </location>
</feature>
<feature type="sequence conflict" description="In Ref. 3; BAH14780." evidence="11" ref="3">
    <original>M</original>
    <variation>I</variation>
    <location>
        <position position="948"/>
    </location>
</feature>
<feature type="sequence conflict" description="In Ref. 3; BAH13725." evidence="11" ref="3">
    <original>R</original>
    <variation>W</variation>
    <location>
        <position position="1336"/>
    </location>
</feature>
<feature type="strand" evidence="16">
    <location>
        <begin position="383"/>
        <end position="390"/>
    </location>
</feature>
<feature type="turn" evidence="16">
    <location>
        <begin position="391"/>
        <end position="393"/>
    </location>
</feature>
<feature type="strand" evidence="16">
    <location>
        <begin position="401"/>
        <end position="404"/>
    </location>
</feature>
<feature type="strand" evidence="16">
    <location>
        <begin position="417"/>
        <end position="422"/>
    </location>
</feature>
<feature type="strand" evidence="16">
    <location>
        <begin position="425"/>
        <end position="433"/>
    </location>
</feature>
<feature type="strand" evidence="16">
    <location>
        <begin position="440"/>
        <end position="447"/>
    </location>
</feature>
<feature type="strand" evidence="16">
    <location>
        <begin position="449"/>
        <end position="451"/>
    </location>
</feature>
<feature type="strand" evidence="16">
    <location>
        <begin position="457"/>
        <end position="459"/>
    </location>
</feature>
<dbReference type="EC" id="3.4.17.22"/>
<dbReference type="EMBL" id="D85390">
    <property type="protein sequence ID" value="BAA33370.1"/>
    <property type="molecule type" value="mRNA"/>
</dbReference>
<dbReference type="EMBL" id="U65090">
    <property type="protein sequence ID" value="AAC51775.2"/>
    <property type="molecule type" value="mRNA"/>
</dbReference>
<dbReference type="EMBL" id="AK302497">
    <property type="protein sequence ID" value="BAH13725.1"/>
    <property type="molecule type" value="mRNA"/>
</dbReference>
<dbReference type="EMBL" id="AK316409">
    <property type="protein sequence ID" value="BAH14780.1"/>
    <property type="molecule type" value="mRNA"/>
</dbReference>
<dbReference type="EMBL" id="AC006050">
    <property type="status" value="NOT_ANNOTATED_CDS"/>
    <property type="molecule type" value="Genomic_DNA"/>
</dbReference>
<dbReference type="EMBL" id="AC090685">
    <property type="status" value="NOT_ANNOTATED_CDS"/>
    <property type="molecule type" value="Genomic_DNA"/>
</dbReference>
<dbReference type="EMBL" id="BC045549">
    <property type="protein sequence ID" value="AAH45549.1"/>
    <property type="molecule type" value="mRNA"/>
</dbReference>
<dbReference type="EMBL" id="BC045624">
    <property type="protein sequence ID" value="AAH45624.1"/>
    <property type="molecule type" value="mRNA"/>
</dbReference>
<dbReference type="EMBL" id="BC051702">
    <property type="protein sequence ID" value="AAH51702.1"/>
    <property type="molecule type" value="mRNA"/>
</dbReference>
<dbReference type="CCDS" id="CCDS11257.1">
    <molecule id="O75976-1"/>
</dbReference>
<dbReference type="CCDS" id="CCDS56025.1">
    <molecule id="O75976-2"/>
</dbReference>
<dbReference type="RefSeq" id="NP_001186704.1">
    <molecule id="O75976-2"/>
    <property type="nucleotide sequence ID" value="NM_001199775.1"/>
</dbReference>
<dbReference type="RefSeq" id="NP_001295.2">
    <molecule id="O75976-1"/>
    <property type="nucleotide sequence ID" value="NM_001304.4"/>
</dbReference>
<dbReference type="PDB" id="5AQ0">
    <property type="method" value="X-ray"/>
    <property type="resolution" value="0.95 A"/>
    <property type="chains" value="A/B=383-461"/>
</dbReference>
<dbReference type="PDBsum" id="5AQ0"/>
<dbReference type="SMR" id="O75976"/>
<dbReference type="BioGRID" id="107754">
    <property type="interactions" value="229"/>
</dbReference>
<dbReference type="FunCoup" id="O75976">
    <property type="interactions" value="1461"/>
</dbReference>
<dbReference type="IntAct" id="O75976">
    <property type="interactions" value="64"/>
</dbReference>
<dbReference type="MINT" id="O75976"/>
<dbReference type="STRING" id="9606.ENSP00000225719"/>
<dbReference type="ChEMBL" id="CHEMBL4523154"/>
<dbReference type="DrugBank" id="DB04489">
    <property type="generic name" value="Guanidinoethylmercaptosuccinic acid"/>
</dbReference>
<dbReference type="MEROPS" id="M14.011"/>
<dbReference type="MEROPS" id="M14.016"/>
<dbReference type="MEROPS" id="M14.950"/>
<dbReference type="CarbonylDB" id="O75976"/>
<dbReference type="GlyConnect" id="1066">
    <property type="glycosylation" value="24 N-Linked glycans (7 sites)"/>
</dbReference>
<dbReference type="GlyCosmos" id="O75976">
    <property type="glycosylation" value="25 sites, 29 glycans"/>
</dbReference>
<dbReference type="GlyGen" id="O75976">
    <property type="glycosylation" value="39 sites, 78 N-linked glycans (11 sites), 7 O-linked glycans (18 sites)"/>
</dbReference>
<dbReference type="iPTMnet" id="O75976"/>
<dbReference type="MetOSite" id="O75976"/>
<dbReference type="PhosphoSitePlus" id="O75976"/>
<dbReference type="SwissPalm" id="O75976"/>
<dbReference type="BioMuta" id="CPD"/>
<dbReference type="jPOST" id="O75976"/>
<dbReference type="MassIVE" id="O75976"/>
<dbReference type="PaxDb" id="9606-ENSP00000225719"/>
<dbReference type="PeptideAtlas" id="O75976"/>
<dbReference type="ProteomicsDB" id="25034"/>
<dbReference type="ProteomicsDB" id="50336">
    <molecule id="O75976-1"/>
</dbReference>
<dbReference type="Pumba" id="O75976"/>
<dbReference type="Antibodypedia" id="26863">
    <property type="antibodies" value="108 antibodies from 27 providers"/>
</dbReference>
<dbReference type="DNASU" id="1362"/>
<dbReference type="Ensembl" id="ENST00000225719.9">
    <molecule id="O75976-1"/>
    <property type="protein sequence ID" value="ENSP00000225719.4"/>
    <property type="gene ID" value="ENSG00000108582.12"/>
</dbReference>
<dbReference type="Ensembl" id="ENST00000543464.6">
    <molecule id="O75976-2"/>
    <property type="protein sequence ID" value="ENSP00000444443.2"/>
    <property type="gene ID" value="ENSG00000108582.12"/>
</dbReference>
<dbReference type="GeneID" id="1362"/>
<dbReference type="KEGG" id="hsa:1362"/>
<dbReference type="MANE-Select" id="ENST00000225719.9">
    <property type="protein sequence ID" value="ENSP00000225719.4"/>
    <property type="RefSeq nucleotide sequence ID" value="NM_001304.5"/>
    <property type="RefSeq protein sequence ID" value="NP_001295.2"/>
</dbReference>
<dbReference type="UCSC" id="uc002hfb.3">
    <molecule id="O75976-1"/>
    <property type="organism name" value="human"/>
</dbReference>
<dbReference type="AGR" id="HGNC:2301"/>
<dbReference type="CTD" id="1362"/>
<dbReference type="DisGeNET" id="1362"/>
<dbReference type="GeneCards" id="CPD"/>
<dbReference type="HGNC" id="HGNC:2301">
    <property type="gene designation" value="CPD"/>
</dbReference>
<dbReference type="HPA" id="ENSG00000108582">
    <property type="expression patterns" value="Low tissue specificity"/>
</dbReference>
<dbReference type="MIM" id="603102">
    <property type="type" value="gene"/>
</dbReference>
<dbReference type="neXtProt" id="NX_O75976"/>
<dbReference type="OpenTargets" id="ENSG00000108582"/>
<dbReference type="PharmGKB" id="PA26823"/>
<dbReference type="VEuPathDB" id="HostDB:ENSG00000108582"/>
<dbReference type="eggNOG" id="KOG2649">
    <property type="taxonomic scope" value="Eukaryota"/>
</dbReference>
<dbReference type="GeneTree" id="ENSGT00940000156919"/>
<dbReference type="HOGENOM" id="CLU_002495_1_0_1"/>
<dbReference type="InParanoid" id="O75976"/>
<dbReference type="OMA" id="CCKYPPG"/>
<dbReference type="OrthoDB" id="10249045at2759"/>
<dbReference type="PAN-GO" id="O75976">
    <property type="GO annotations" value="4 GO annotations based on evolutionary models"/>
</dbReference>
<dbReference type="PhylomeDB" id="O75976"/>
<dbReference type="TreeFam" id="TF315592"/>
<dbReference type="BRENDA" id="3.4.17.22">
    <property type="organism ID" value="2681"/>
</dbReference>
<dbReference type="PathwayCommons" id="O75976"/>
<dbReference type="Reactome" id="R-HSA-432722">
    <property type="pathway name" value="Golgi Associated Vesicle Biogenesis"/>
</dbReference>
<dbReference type="Reactome" id="R-HSA-9696264">
    <property type="pathway name" value="RND3 GTPase cycle"/>
</dbReference>
<dbReference type="Reactome" id="R-HSA-9696273">
    <property type="pathway name" value="RND1 GTPase cycle"/>
</dbReference>
<dbReference type="SignaLink" id="O75976"/>
<dbReference type="BioGRID-ORCS" id="1362">
    <property type="hits" value="64 hits in 1171 CRISPR screens"/>
</dbReference>
<dbReference type="ChiTaRS" id="CPD">
    <property type="organism name" value="human"/>
</dbReference>
<dbReference type="GeneWiki" id="CPD_(gene)"/>
<dbReference type="GenomeRNAi" id="1362"/>
<dbReference type="Pharos" id="O75976">
    <property type="development level" value="Tbio"/>
</dbReference>
<dbReference type="PRO" id="PR:O75976"/>
<dbReference type="Proteomes" id="UP000005640">
    <property type="component" value="Chromosome 17"/>
</dbReference>
<dbReference type="RNAct" id="O75976">
    <property type="molecule type" value="protein"/>
</dbReference>
<dbReference type="Bgee" id="ENSG00000108582">
    <property type="expression patterns" value="Expressed in parotid gland and 214 other cell types or tissues"/>
</dbReference>
<dbReference type="ExpressionAtlas" id="O75976">
    <property type="expression patterns" value="baseline and differential"/>
</dbReference>
<dbReference type="GO" id="GO:0070062">
    <property type="term" value="C:extracellular exosome"/>
    <property type="evidence" value="ECO:0007005"/>
    <property type="project" value="UniProtKB"/>
</dbReference>
<dbReference type="GO" id="GO:0005615">
    <property type="term" value="C:extracellular space"/>
    <property type="evidence" value="ECO:0000318"/>
    <property type="project" value="GO_Central"/>
</dbReference>
<dbReference type="GO" id="GO:0016020">
    <property type="term" value="C:membrane"/>
    <property type="evidence" value="ECO:0007005"/>
    <property type="project" value="UniProtKB"/>
</dbReference>
<dbReference type="GO" id="GO:0005886">
    <property type="term" value="C:plasma membrane"/>
    <property type="evidence" value="ECO:0007669"/>
    <property type="project" value="UniProtKB-SubCell"/>
</dbReference>
<dbReference type="GO" id="GO:0004181">
    <property type="term" value="F:metallocarboxypeptidase activity"/>
    <property type="evidence" value="ECO:0000318"/>
    <property type="project" value="GO_Central"/>
</dbReference>
<dbReference type="GO" id="GO:0004185">
    <property type="term" value="F:serine-type carboxypeptidase activity"/>
    <property type="evidence" value="ECO:0000304"/>
    <property type="project" value="ProtInc"/>
</dbReference>
<dbReference type="GO" id="GO:0008270">
    <property type="term" value="F:zinc ion binding"/>
    <property type="evidence" value="ECO:0007669"/>
    <property type="project" value="InterPro"/>
</dbReference>
<dbReference type="GO" id="GO:0006518">
    <property type="term" value="P:peptide metabolic process"/>
    <property type="evidence" value="ECO:0000318"/>
    <property type="project" value="GO_Central"/>
</dbReference>
<dbReference type="GO" id="GO:0016485">
    <property type="term" value="P:protein processing"/>
    <property type="evidence" value="ECO:0000318"/>
    <property type="project" value="GO_Central"/>
</dbReference>
<dbReference type="CDD" id="cd03863">
    <property type="entry name" value="M14_CPD_II"/>
    <property type="match status" value="1"/>
</dbReference>
<dbReference type="CDD" id="cd06245">
    <property type="entry name" value="M14_CPD_III"/>
    <property type="match status" value="1"/>
</dbReference>
<dbReference type="CDD" id="cd11308">
    <property type="entry name" value="Peptidase_M14NE-CP-C_like"/>
    <property type="match status" value="3"/>
</dbReference>
<dbReference type="FunFam" id="2.60.40.1120:FF:000005">
    <property type="entry name" value="Carboxypeptidase D"/>
    <property type="match status" value="1"/>
</dbReference>
<dbReference type="FunFam" id="2.60.40.1120:FF:000006">
    <property type="entry name" value="Carboxypeptidase D"/>
    <property type="match status" value="1"/>
</dbReference>
<dbReference type="FunFam" id="2.60.40.1120:FF:000008">
    <property type="entry name" value="Carboxypeptidase D"/>
    <property type="match status" value="1"/>
</dbReference>
<dbReference type="FunFam" id="3.40.630.10:FF:000020">
    <property type="entry name" value="Carboxypeptidase D"/>
    <property type="match status" value="1"/>
</dbReference>
<dbReference type="FunFam" id="3.40.630.10:FF:000026">
    <property type="entry name" value="Carboxypeptidase D"/>
    <property type="match status" value="1"/>
</dbReference>
<dbReference type="FunFam" id="3.40.630.10:FF:000043">
    <property type="entry name" value="Carboxypeptidase D"/>
    <property type="match status" value="1"/>
</dbReference>
<dbReference type="Gene3D" id="2.60.40.1120">
    <property type="entry name" value="Carboxypeptidase-like, regulatory domain"/>
    <property type="match status" value="3"/>
</dbReference>
<dbReference type="Gene3D" id="3.40.630.10">
    <property type="entry name" value="Zn peptidases"/>
    <property type="match status" value="3"/>
</dbReference>
<dbReference type="InterPro" id="IPR008969">
    <property type="entry name" value="CarboxyPept-like_regulatory"/>
</dbReference>
<dbReference type="InterPro" id="IPR034224">
    <property type="entry name" value="M14_CPD_II"/>
</dbReference>
<dbReference type="InterPro" id="IPR033848">
    <property type="entry name" value="M14_CPD_III"/>
</dbReference>
<dbReference type="InterPro" id="IPR000834">
    <property type="entry name" value="Peptidase_M14"/>
</dbReference>
<dbReference type="InterPro" id="IPR050753">
    <property type="entry name" value="Peptidase_M14_domain"/>
</dbReference>
<dbReference type="PANTHER" id="PTHR11532:SF73">
    <property type="entry name" value="CARBOXYPEPTIDASE D"/>
    <property type="match status" value="1"/>
</dbReference>
<dbReference type="PANTHER" id="PTHR11532">
    <property type="entry name" value="PROTEASE M14 CARBOXYPEPTIDASE"/>
    <property type="match status" value="1"/>
</dbReference>
<dbReference type="Pfam" id="PF13620">
    <property type="entry name" value="CarboxypepD_reg"/>
    <property type="match status" value="3"/>
</dbReference>
<dbReference type="Pfam" id="PF00246">
    <property type="entry name" value="Peptidase_M14"/>
    <property type="match status" value="3"/>
</dbReference>
<dbReference type="PRINTS" id="PR00765">
    <property type="entry name" value="CRBOXYPTASEA"/>
</dbReference>
<dbReference type="SMART" id="SM00631">
    <property type="entry name" value="Zn_pept"/>
    <property type="match status" value="3"/>
</dbReference>
<dbReference type="SUPFAM" id="SSF49464">
    <property type="entry name" value="Carboxypeptidase regulatory domain-like"/>
    <property type="match status" value="3"/>
</dbReference>
<dbReference type="SUPFAM" id="SSF53187">
    <property type="entry name" value="Zn-dependent exopeptidases"/>
    <property type="match status" value="3"/>
</dbReference>
<dbReference type="PROSITE" id="PS00132">
    <property type="entry name" value="CARBOXYPEPT_ZN_1"/>
    <property type="match status" value="2"/>
</dbReference>
<dbReference type="PROSITE" id="PS00133">
    <property type="entry name" value="CARBOXYPEPT_ZN_2"/>
    <property type="match status" value="2"/>
</dbReference>
<dbReference type="PROSITE" id="PS52035">
    <property type="entry name" value="PEPTIDASE_M14"/>
    <property type="match status" value="3"/>
</dbReference>
<sequence length="1380" mass="152931">MASGRDERPPWRLGRLLLLMCLLLLGSSARAAHIKKAEATTTTTSAGAEAAEGQFDRYYHEEELESALREAAAAGLPGLARLFSIGRSVEGRPLWVLRLTAGLGSLIPEGDAGPDAAGPDAAGPLLPGRPQVKLVGNMHGDETVSRQVLIYLARELAAGYRRGDPRLVRLLNTTDVYLLPSLNPDGFERAREGDCGFGDGGPSGASGRDNSRGRDLNRSFPDQFSTGEPPALDEVPEVRALIEWIRRNKFVLSGNLHGGSVVASYPFDDSPEHKATGIYSKTSDDEVFKYLAKAYASNHPIMKTGEPHCPGDEDETFKDGITNGAHWYDVEGGMQDYNYVWANCFEITLELSCCKYPPASQLRQEWENNRESLITLIEKVHIGVKGFVKDSITGSGLENATISVAGINHNITTGRFGDFYRLLVPGTYNLTVVLTGYMPLTVTNVVVKEGPATEVDFSLRPTVTSVIPDTTEAVSTASTVAIPNILSGTSSSYQPIQPKDFHHHHFPDMEIFLRRFANEYPNITRLYSLGKSVESRELYVMEISDNPGVHEPGEPEFKYIGNMHGNEVVGRELLLNLIEYLCKNFGTDPEVTDLVHNTRIHLMPSMNPDGYEKSQEGDSISVIGRNNSNNFDLNRNFPDQFVQITDPTQPETIAVMSWMKSYPFVLSANLHGGSLVVNYPFDDDEQGLATYSKSPDDAVFQQIALSYSKENSQMFQGRPCKNMYPNEYFPHGITNGASWYNVPGGMQDWNYLQTNCFEVTIELGCVKYPLEKELPNFWEQNRRSLIQFMKQVHQGVRGFVLDATDGRGILNATISVAEINHPVTTYKTGDYWRLLVPGTYKITASARGYNPVTKNVTVKSEGAIQVNFTLVRSSTDSNNESKKGKGASSSTNDASDPTTKEFETLIKDLSAENGLESLMLRSSSNLALALYRYHSYKDLSEFLRGLVMNYPHITNLTNLGQSTEYRHIWSLEISNKPNVSEPEEPKIRFVAGIHGNAPVGTELLLALAEFLCLNYKKNPAVTQLVDRTRIVIVPSLNPDGRERAQEKDCTSKIGQTNARGKDLDTDFTNNASQPETKAIIENLIQKQDFSLSVALDGGSMLVTYPYDKPVQTVENKETLKHLASLYANNHPSMHMGQPSCPNKSDENIPGGVMRGAEWHSHLGSMKDYSVTYGHCPEITVYTSCCYFPSAARLPSLWADNKRSLLSMLVEVHKGVHGFVKDKTGKPISKAVIVLNEGIKVQTKEGGYFHVLLAPGVHNIIAIADGYQQQHSQVFVHHDAASSVVIVFDTDNRIFGLPRELVVTVSGATMSALILTACIIWCICSIKSNRHKDGFHRLRQHHDEYEDEIRMMSTGSKKSLLSHEFQDETDTEEETLYSSKH</sequence>
<organism>
    <name type="scientific">Homo sapiens</name>
    <name type="common">Human</name>
    <dbReference type="NCBI Taxonomy" id="9606"/>
    <lineage>
        <taxon>Eukaryota</taxon>
        <taxon>Metazoa</taxon>
        <taxon>Chordata</taxon>
        <taxon>Craniata</taxon>
        <taxon>Vertebrata</taxon>
        <taxon>Euteleostomi</taxon>
        <taxon>Mammalia</taxon>
        <taxon>Eutheria</taxon>
        <taxon>Euarchontoglires</taxon>
        <taxon>Primates</taxon>
        <taxon>Haplorrhini</taxon>
        <taxon>Catarrhini</taxon>
        <taxon>Hominidae</taxon>
        <taxon>Homo</taxon>
    </lineage>
</organism>
<evidence type="ECO:0000250" key="1">
    <source>
        <dbReference type="UniProtKB" id="O89001"/>
    </source>
</evidence>
<evidence type="ECO:0000250" key="2">
    <source>
        <dbReference type="UniProtKB" id="Q90240"/>
    </source>
</evidence>
<evidence type="ECO:0000255" key="3"/>
<evidence type="ECO:0000255" key="4">
    <source>
        <dbReference type="PROSITE-ProRule" id="PRU01379"/>
    </source>
</evidence>
<evidence type="ECO:0000256" key="5">
    <source>
        <dbReference type="SAM" id="MobiDB-lite"/>
    </source>
</evidence>
<evidence type="ECO:0000269" key="6">
    <source>
    </source>
</evidence>
<evidence type="ECO:0000269" key="7">
    <source>
    </source>
</evidence>
<evidence type="ECO:0000269" key="8">
    <source>
    </source>
</evidence>
<evidence type="ECO:0000269" key="9">
    <source>
    </source>
</evidence>
<evidence type="ECO:0000303" key="10">
    <source>
    </source>
</evidence>
<evidence type="ECO:0000305" key="11"/>
<evidence type="ECO:0007744" key="12">
    <source>
    </source>
</evidence>
<evidence type="ECO:0007744" key="13">
    <source>
    </source>
</evidence>
<evidence type="ECO:0007744" key="14">
    <source>
    </source>
</evidence>
<evidence type="ECO:0007744" key="15">
    <source>
    </source>
</evidence>
<evidence type="ECO:0007829" key="16">
    <source>
        <dbReference type="PDB" id="5AQ0"/>
    </source>
</evidence>